<evidence type="ECO:0000250" key="1">
    <source>
        <dbReference type="UniProtKB" id="Q9XF91"/>
    </source>
</evidence>
<evidence type="ECO:0000255" key="2"/>
<evidence type="ECO:0000269" key="3">
    <source>
    </source>
</evidence>
<evidence type="ECO:0000303" key="4">
    <source>
    </source>
</evidence>
<evidence type="ECO:0000305" key="5"/>
<gene>
    <name evidence="4" type="primary">SEP1</name>
    <name type="ordered locus">At4g34190</name>
    <name type="ORF">F28A23.50</name>
</gene>
<feature type="transit peptide" description="Chloroplast" evidence="2">
    <location>
        <begin position="1"/>
        <end position="73"/>
    </location>
</feature>
<feature type="chain" id="PRO_0000422367" description="Stress enhanced protein 1, chloroplastic">
    <location>
        <begin position="74"/>
        <end position="146"/>
    </location>
</feature>
<feature type="transmembrane region" description="Helical" evidence="2">
    <location>
        <begin position="84"/>
        <end position="104"/>
    </location>
</feature>
<feature type="transmembrane region" description="Helical" evidence="2">
    <location>
        <begin position="120"/>
        <end position="140"/>
    </location>
</feature>
<organism>
    <name type="scientific">Arabidopsis thaliana</name>
    <name type="common">Mouse-ear cress</name>
    <dbReference type="NCBI Taxonomy" id="3702"/>
    <lineage>
        <taxon>Eukaryota</taxon>
        <taxon>Viridiplantae</taxon>
        <taxon>Streptophyta</taxon>
        <taxon>Embryophyta</taxon>
        <taxon>Tracheophyta</taxon>
        <taxon>Spermatophyta</taxon>
        <taxon>Magnoliopsida</taxon>
        <taxon>eudicotyledons</taxon>
        <taxon>Gunneridae</taxon>
        <taxon>Pentapetalae</taxon>
        <taxon>rosids</taxon>
        <taxon>malvids</taxon>
        <taxon>Brassicales</taxon>
        <taxon>Brassicaceae</taxon>
        <taxon>Camelineae</taxon>
        <taxon>Arabidopsis</taxon>
    </lineage>
</organism>
<name>STEP1_ARATH</name>
<dbReference type="EMBL" id="AF133716">
    <property type="protein sequence ID" value="AAF61625.1"/>
    <property type="molecule type" value="mRNA"/>
</dbReference>
<dbReference type="EMBL" id="AL021961">
    <property type="protein sequence ID" value="CAA17553.1"/>
    <property type="status" value="ALT_SEQ"/>
    <property type="molecule type" value="Genomic_DNA"/>
</dbReference>
<dbReference type="EMBL" id="AL161585">
    <property type="protein sequence ID" value="CAB80136.1"/>
    <property type="status" value="ALT_SEQ"/>
    <property type="molecule type" value="Genomic_DNA"/>
</dbReference>
<dbReference type="EMBL" id="CP002687">
    <property type="protein sequence ID" value="AEE86338.1"/>
    <property type="molecule type" value="Genomic_DNA"/>
</dbReference>
<dbReference type="EMBL" id="AY090357">
    <property type="protein sequence ID" value="AAL91261.1"/>
    <property type="molecule type" value="mRNA"/>
</dbReference>
<dbReference type="EMBL" id="BT000842">
    <property type="protein sequence ID" value="AAN38679.1"/>
    <property type="molecule type" value="mRNA"/>
</dbReference>
<dbReference type="EMBL" id="AY088639">
    <property type="protein sequence ID" value="AAM66961.1"/>
    <property type="molecule type" value="mRNA"/>
</dbReference>
<dbReference type="PIR" id="T05417">
    <property type="entry name" value="T05417"/>
</dbReference>
<dbReference type="RefSeq" id="NP_567958.1">
    <property type="nucleotide sequence ID" value="NM_119582.4"/>
</dbReference>
<dbReference type="BioGRID" id="14849">
    <property type="interactions" value="6"/>
</dbReference>
<dbReference type="FunCoup" id="Q9M7I9">
    <property type="interactions" value="1970"/>
</dbReference>
<dbReference type="IntAct" id="Q9M7I9">
    <property type="interactions" value="2"/>
</dbReference>
<dbReference type="STRING" id="3702.Q9M7I9"/>
<dbReference type="PaxDb" id="3702-AT4G34190.1"/>
<dbReference type="EnsemblPlants" id="AT4G34190.1">
    <property type="protein sequence ID" value="AT4G34190.1"/>
    <property type="gene ID" value="AT4G34190"/>
</dbReference>
<dbReference type="GeneID" id="829567"/>
<dbReference type="Gramene" id="AT4G34190.1">
    <property type="protein sequence ID" value="AT4G34190.1"/>
    <property type="gene ID" value="AT4G34190"/>
</dbReference>
<dbReference type="KEGG" id="ath:AT4G34190"/>
<dbReference type="Araport" id="AT4G34190"/>
<dbReference type="TAIR" id="AT4G34190">
    <property type="gene designation" value="SEP1"/>
</dbReference>
<dbReference type="eggNOG" id="ENOG502S4YQ">
    <property type="taxonomic scope" value="Eukaryota"/>
</dbReference>
<dbReference type="HOGENOM" id="CLU_126272_1_0_1"/>
<dbReference type="InParanoid" id="Q9M7I9"/>
<dbReference type="OMA" id="VCKATTF"/>
<dbReference type="OrthoDB" id="543868at2759"/>
<dbReference type="PRO" id="PR:Q9M7I9"/>
<dbReference type="Proteomes" id="UP000006548">
    <property type="component" value="Chromosome 4"/>
</dbReference>
<dbReference type="ExpressionAtlas" id="Q9M7I9">
    <property type="expression patterns" value="baseline and differential"/>
</dbReference>
<dbReference type="GO" id="GO:0009535">
    <property type="term" value="C:chloroplast thylakoid membrane"/>
    <property type="evidence" value="ECO:0000314"/>
    <property type="project" value="TAIR"/>
</dbReference>
<dbReference type="GO" id="GO:0009523">
    <property type="term" value="C:photosystem II"/>
    <property type="evidence" value="ECO:0007669"/>
    <property type="project" value="UniProtKB-KW"/>
</dbReference>
<dbReference type="GO" id="GO:0016168">
    <property type="term" value="F:chlorophyll binding"/>
    <property type="evidence" value="ECO:0000304"/>
    <property type="project" value="TAIR"/>
</dbReference>
<dbReference type="GO" id="GO:0071486">
    <property type="term" value="P:cellular response to high light intensity"/>
    <property type="evidence" value="ECO:0000270"/>
    <property type="project" value="UniProtKB"/>
</dbReference>
<dbReference type="GO" id="GO:0071492">
    <property type="term" value="P:cellular response to UV-A"/>
    <property type="evidence" value="ECO:0000270"/>
    <property type="project" value="UniProtKB"/>
</dbReference>
<dbReference type="GO" id="GO:0015979">
    <property type="term" value="P:photosynthesis"/>
    <property type="evidence" value="ECO:0007669"/>
    <property type="project" value="UniProtKB-KW"/>
</dbReference>
<dbReference type="GO" id="GO:0009644">
    <property type="term" value="P:response to high light intensity"/>
    <property type="evidence" value="ECO:0000270"/>
    <property type="project" value="TAIR"/>
</dbReference>
<dbReference type="GO" id="GO:0009611">
    <property type="term" value="P:response to wounding"/>
    <property type="evidence" value="ECO:0000270"/>
    <property type="project" value="UniProtKB"/>
</dbReference>
<dbReference type="SUPFAM" id="SSF103511">
    <property type="entry name" value="Chlorophyll a-b binding protein"/>
    <property type="match status" value="1"/>
</dbReference>
<protein>
    <recommendedName>
        <fullName evidence="5">Stress enhanced protein 1, chloroplastic</fullName>
    </recommendedName>
</protein>
<accession>Q9M7I9</accession>
<accession>O49486</accession>
<comment type="function">
    <text evidence="1 5">May be involved in non-photochemical quenching, a process that maintains the balance between dissipation and utilization of light energy to minimize generation of oxidizing molecules, thereby protecting the plant against photo-oxidative damage (By similarity). May play a photoprotective role in the thylakoid membrane in response to light stress (Probable).</text>
</comment>
<comment type="subcellular location">
    <subcellularLocation>
        <location evidence="3">Plastid</location>
        <location evidence="3">Chloroplast thylakoid membrane</location>
        <topology evidence="2">Multi-pass membrane protein</topology>
    </subcellularLocation>
</comment>
<comment type="induction">
    <text evidence="3">Present at low levels under low light conditions, but accumulates under high-intensity light. Induced by UV-A illumination. Fades out upon wounding.</text>
</comment>
<comment type="similarity">
    <text evidence="5">Belongs to the ELIP/psbS family.</text>
</comment>
<comment type="sequence caution" evidence="5">
    <conflict type="erroneous gene model prediction">
        <sequence resource="EMBL-CDS" id="CAA17553"/>
    </conflict>
</comment>
<comment type="sequence caution" evidence="5">
    <conflict type="erroneous gene model prediction">
        <sequence resource="EMBL-CDS" id="CAB80136"/>
    </conflict>
</comment>
<reference key="1">
    <citation type="journal article" date="2000" name="Proc. Natl. Acad. Sci. U.S.A.">
        <title>Light stress-regulated two-helix proteins in Arabidopsis thaliana related to the chlorophyll a/b-binding gene family.</title>
        <authorList>
            <person name="Heddad M."/>
            <person name="Adamska I."/>
        </authorList>
    </citation>
    <scope>NUCLEOTIDE SEQUENCE [MRNA]</scope>
    <scope>INDUCTION BY LIGHT</scope>
    <scope>SUBCELLULAR LOCATION</scope>
    <source>
        <strain>cv. Columbia</strain>
    </source>
</reference>
<reference key="2">
    <citation type="journal article" date="1999" name="Nature">
        <title>Sequence and analysis of chromosome 4 of the plant Arabidopsis thaliana.</title>
        <authorList>
            <person name="Mayer K.F.X."/>
            <person name="Schueller C."/>
            <person name="Wambutt R."/>
            <person name="Murphy G."/>
            <person name="Volckaert G."/>
            <person name="Pohl T."/>
            <person name="Duesterhoeft A."/>
            <person name="Stiekema W."/>
            <person name="Entian K.-D."/>
            <person name="Terryn N."/>
            <person name="Harris B."/>
            <person name="Ansorge W."/>
            <person name="Brandt P."/>
            <person name="Grivell L.A."/>
            <person name="Rieger M."/>
            <person name="Weichselgartner M."/>
            <person name="de Simone V."/>
            <person name="Obermaier B."/>
            <person name="Mache R."/>
            <person name="Mueller M."/>
            <person name="Kreis M."/>
            <person name="Delseny M."/>
            <person name="Puigdomenech P."/>
            <person name="Watson M."/>
            <person name="Schmidtheini T."/>
            <person name="Reichert B."/>
            <person name="Portetelle D."/>
            <person name="Perez-Alonso M."/>
            <person name="Boutry M."/>
            <person name="Bancroft I."/>
            <person name="Vos P."/>
            <person name="Hoheisel J."/>
            <person name="Zimmermann W."/>
            <person name="Wedler H."/>
            <person name="Ridley P."/>
            <person name="Langham S.-A."/>
            <person name="McCullagh B."/>
            <person name="Bilham L."/>
            <person name="Robben J."/>
            <person name="van der Schueren J."/>
            <person name="Grymonprez B."/>
            <person name="Chuang Y.-J."/>
            <person name="Vandenbussche F."/>
            <person name="Braeken M."/>
            <person name="Weltjens I."/>
            <person name="Voet M."/>
            <person name="Bastiaens I."/>
            <person name="Aert R."/>
            <person name="Defoor E."/>
            <person name="Weitzenegger T."/>
            <person name="Bothe G."/>
            <person name="Ramsperger U."/>
            <person name="Hilbert H."/>
            <person name="Braun M."/>
            <person name="Holzer E."/>
            <person name="Brandt A."/>
            <person name="Peters S."/>
            <person name="van Staveren M."/>
            <person name="Dirkse W."/>
            <person name="Mooijman P."/>
            <person name="Klein Lankhorst R."/>
            <person name="Rose M."/>
            <person name="Hauf J."/>
            <person name="Koetter P."/>
            <person name="Berneiser S."/>
            <person name="Hempel S."/>
            <person name="Feldpausch M."/>
            <person name="Lamberth S."/>
            <person name="Van den Daele H."/>
            <person name="De Keyser A."/>
            <person name="Buysshaert C."/>
            <person name="Gielen J."/>
            <person name="Villarroel R."/>
            <person name="De Clercq R."/>
            <person name="van Montagu M."/>
            <person name="Rogers J."/>
            <person name="Cronin A."/>
            <person name="Quail M.A."/>
            <person name="Bray-Allen S."/>
            <person name="Clark L."/>
            <person name="Doggett J."/>
            <person name="Hall S."/>
            <person name="Kay M."/>
            <person name="Lennard N."/>
            <person name="McLay K."/>
            <person name="Mayes R."/>
            <person name="Pettett A."/>
            <person name="Rajandream M.A."/>
            <person name="Lyne M."/>
            <person name="Benes V."/>
            <person name="Rechmann S."/>
            <person name="Borkova D."/>
            <person name="Bloecker H."/>
            <person name="Scharfe M."/>
            <person name="Grimm M."/>
            <person name="Loehnert T.-H."/>
            <person name="Dose S."/>
            <person name="de Haan M."/>
            <person name="Maarse A.C."/>
            <person name="Schaefer M."/>
            <person name="Mueller-Auer S."/>
            <person name="Gabel C."/>
            <person name="Fuchs M."/>
            <person name="Fartmann B."/>
            <person name="Granderath K."/>
            <person name="Dauner D."/>
            <person name="Herzl A."/>
            <person name="Neumann S."/>
            <person name="Argiriou A."/>
            <person name="Vitale D."/>
            <person name="Liguori R."/>
            <person name="Piravandi E."/>
            <person name="Massenet O."/>
            <person name="Quigley F."/>
            <person name="Clabauld G."/>
            <person name="Muendlein A."/>
            <person name="Felber R."/>
            <person name="Schnabl S."/>
            <person name="Hiller R."/>
            <person name="Schmidt W."/>
            <person name="Lecharny A."/>
            <person name="Aubourg S."/>
            <person name="Chefdor F."/>
            <person name="Cooke R."/>
            <person name="Berger C."/>
            <person name="Monfort A."/>
            <person name="Casacuberta E."/>
            <person name="Gibbons T."/>
            <person name="Weber N."/>
            <person name="Vandenbol M."/>
            <person name="Bargues M."/>
            <person name="Terol J."/>
            <person name="Torres A."/>
            <person name="Perez-Perez A."/>
            <person name="Purnelle B."/>
            <person name="Bent E."/>
            <person name="Johnson S."/>
            <person name="Tacon D."/>
            <person name="Jesse T."/>
            <person name="Heijnen L."/>
            <person name="Schwarz S."/>
            <person name="Scholler P."/>
            <person name="Heber S."/>
            <person name="Francs P."/>
            <person name="Bielke C."/>
            <person name="Frishman D."/>
            <person name="Haase D."/>
            <person name="Lemcke K."/>
            <person name="Mewes H.-W."/>
            <person name="Stocker S."/>
            <person name="Zaccaria P."/>
            <person name="Bevan M."/>
            <person name="Wilson R.K."/>
            <person name="de la Bastide M."/>
            <person name="Habermann K."/>
            <person name="Parnell L."/>
            <person name="Dedhia N."/>
            <person name="Gnoj L."/>
            <person name="Schutz K."/>
            <person name="Huang E."/>
            <person name="Spiegel L."/>
            <person name="Sekhon M."/>
            <person name="Murray J."/>
            <person name="Sheet P."/>
            <person name="Cordes M."/>
            <person name="Abu-Threideh J."/>
            <person name="Stoneking T."/>
            <person name="Kalicki J."/>
            <person name="Graves T."/>
            <person name="Harmon G."/>
            <person name="Edwards J."/>
            <person name="Latreille P."/>
            <person name="Courtney L."/>
            <person name="Cloud J."/>
            <person name="Abbott A."/>
            <person name="Scott K."/>
            <person name="Johnson D."/>
            <person name="Minx P."/>
            <person name="Bentley D."/>
            <person name="Fulton B."/>
            <person name="Miller N."/>
            <person name="Greco T."/>
            <person name="Kemp K."/>
            <person name="Kramer J."/>
            <person name="Fulton L."/>
            <person name="Mardis E."/>
            <person name="Dante M."/>
            <person name="Pepin K."/>
            <person name="Hillier L.W."/>
            <person name="Nelson J."/>
            <person name="Spieth J."/>
            <person name="Ryan E."/>
            <person name="Andrews S."/>
            <person name="Geisel C."/>
            <person name="Layman D."/>
            <person name="Du H."/>
            <person name="Ali J."/>
            <person name="Berghoff A."/>
            <person name="Jones K."/>
            <person name="Drone K."/>
            <person name="Cotton M."/>
            <person name="Joshu C."/>
            <person name="Antonoiu B."/>
            <person name="Zidanic M."/>
            <person name="Strong C."/>
            <person name="Sun H."/>
            <person name="Lamar B."/>
            <person name="Yordan C."/>
            <person name="Ma P."/>
            <person name="Zhong J."/>
            <person name="Preston R."/>
            <person name="Vil D."/>
            <person name="Shekher M."/>
            <person name="Matero A."/>
            <person name="Shah R."/>
            <person name="Swaby I.K."/>
            <person name="O'Shaughnessy A."/>
            <person name="Rodriguez M."/>
            <person name="Hoffman J."/>
            <person name="Till S."/>
            <person name="Granat S."/>
            <person name="Shohdy N."/>
            <person name="Hasegawa A."/>
            <person name="Hameed A."/>
            <person name="Lodhi M."/>
            <person name="Johnson A."/>
            <person name="Chen E."/>
            <person name="Marra M.A."/>
            <person name="Martienssen R."/>
            <person name="McCombie W.R."/>
        </authorList>
    </citation>
    <scope>NUCLEOTIDE SEQUENCE [LARGE SCALE GENOMIC DNA]</scope>
    <source>
        <strain>cv. Columbia</strain>
    </source>
</reference>
<reference key="3">
    <citation type="journal article" date="2017" name="Plant J.">
        <title>Araport11: a complete reannotation of the Arabidopsis thaliana reference genome.</title>
        <authorList>
            <person name="Cheng C.Y."/>
            <person name="Krishnakumar V."/>
            <person name="Chan A.P."/>
            <person name="Thibaud-Nissen F."/>
            <person name="Schobel S."/>
            <person name="Town C.D."/>
        </authorList>
    </citation>
    <scope>GENOME REANNOTATION</scope>
    <source>
        <strain>cv. Columbia</strain>
    </source>
</reference>
<reference key="4">
    <citation type="journal article" date="2003" name="Science">
        <title>Empirical analysis of transcriptional activity in the Arabidopsis genome.</title>
        <authorList>
            <person name="Yamada K."/>
            <person name="Lim J."/>
            <person name="Dale J.M."/>
            <person name="Chen H."/>
            <person name="Shinn P."/>
            <person name="Palm C.J."/>
            <person name="Southwick A.M."/>
            <person name="Wu H.C."/>
            <person name="Kim C.J."/>
            <person name="Nguyen M."/>
            <person name="Pham P.K."/>
            <person name="Cheuk R.F."/>
            <person name="Karlin-Newmann G."/>
            <person name="Liu S.X."/>
            <person name="Lam B."/>
            <person name="Sakano H."/>
            <person name="Wu T."/>
            <person name="Yu G."/>
            <person name="Miranda M."/>
            <person name="Quach H.L."/>
            <person name="Tripp M."/>
            <person name="Chang C.H."/>
            <person name="Lee J.M."/>
            <person name="Toriumi M.J."/>
            <person name="Chan M.M."/>
            <person name="Tang C.C."/>
            <person name="Onodera C.S."/>
            <person name="Deng J.M."/>
            <person name="Akiyama K."/>
            <person name="Ansari Y."/>
            <person name="Arakawa T."/>
            <person name="Banh J."/>
            <person name="Banno F."/>
            <person name="Bowser L."/>
            <person name="Brooks S.Y."/>
            <person name="Carninci P."/>
            <person name="Chao Q."/>
            <person name="Choy N."/>
            <person name="Enju A."/>
            <person name="Goldsmith A.D."/>
            <person name="Gurjal M."/>
            <person name="Hansen N.F."/>
            <person name="Hayashizaki Y."/>
            <person name="Johnson-Hopson C."/>
            <person name="Hsuan V.W."/>
            <person name="Iida K."/>
            <person name="Karnes M."/>
            <person name="Khan S."/>
            <person name="Koesema E."/>
            <person name="Ishida J."/>
            <person name="Jiang P.X."/>
            <person name="Jones T."/>
            <person name="Kawai J."/>
            <person name="Kamiya A."/>
            <person name="Meyers C."/>
            <person name="Nakajima M."/>
            <person name="Narusaka M."/>
            <person name="Seki M."/>
            <person name="Sakurai T."/>
            <person name="Satou M."/>
            <person name="Tamse R."/>
            <person name="Vaysberg M."/>
            <person name="Wallender E.K."/>
            <person name="Wong C."/>
            <person name="Yamamura Y."/>
            <person name="Yuan S."/>
            <person name="Shinozaki K."/>
            <person name="Davis R.W."/>
            <person name="Theologis A."/>
            <person name="Ecker J.R."/>
        </authorList>
    </citation>
    <scope>NUCLEOTIDE SEQUENCE [LARGE SCALE MRNA]</scope>
    <source>
        <strain>cv. Columbia</strain>
    </source>
</reference>
<reference key="5">
    <citation type="submission" date="2002-03" db="EMBL/GenBank/DDBJ databases">
        <title>Full-length cDNA from Arabidopsis thaliana.</title>
        <authorList>
            <person name="Brover V.V."/>
            <person name="Troukhan M.E."/>
            <person name="Alexandrov N.A."/>
            <person name="Lu Y.-P."/>
            <person name="Flavell R.B."/>
            <person name="Feldmann K.A."/>
        </authorList>
    </citation>
    <scope>NUCLEOTIDE SEQUENCE [LARGE SCALE MRNA]</scope>
</reference>
<proteinExistence type="evidence at transcript level"/>
<sequence>MALSQVSASLAFSLPNSGALKLATITNPTSTCRVHVPQLAGIRSTFASGSPLLPLKLSMTRRGGNRAASVSIRSEQSTEGSSGLDIWLGRGAMVGFAVAITVEISTGKGLLENFGVASPLPTVALAVTALVGVLAAVFIFQSSSKN</sequence>
<keyword id="KW-0150">Chloroplast</keyword>
<keyword id="KW-0472">Membrane</keyword>
<keyword id="KW-0602">Photosynthesis</keyword>
<keyword id="KW-0604">Photosystem II</keyword>
<keyword id="KW-0934">Plastid</keyword>
<keyword id="KW-1185">Reference proteome</keyword>
<keyword id="KW-0793">Thylakoid</keyword>
<keyword id="KW-0809">Transit peptide</keyword>
<keyword id="KW-0812">Transmembrane</keyword>
<keyword id="KW-1133">Transmembrane helix</keyword>